<keyword id="KW-0627">Porphyrin biosynthesis</keyword>
<keyword id="KW-1185">Reference proteome</keyword>
<keyword id="KW-0808">Transferase</keyword>
<organism>
    <name type="scientific">Methanothermobacter thermautotrophicus (strain ATCC 29096 / DSM 1053 / JCM 10044 / NBRC 100330 / Delta H)</name>
    <name type="common">Methanobacterium thermoautotrophicum</name>
    <dbReference type="NCBI Taxonomy" id="187420"/>
    <lineage>
        <taxon>Archaea</taxon>
        <taxon>Methanobacteriati</taxon>
        <taxon>Methanobacteriota</taxon>
        <taxon>Methanomada group</taxon>
        <taxon>Methanobacteria</taxon>
        <taxon>Methanobacteriales</taxon>
        <taxon>Methanobacteriaceae</taxon>
        <taxon>Methanothermobacter</taxon>
    </lineage>
</organism>
<reference key="1">
    <citation type="journal article" date="1997" name="J. Bacteriol.">
        <title>Complete genome sequence of Methanobacterium thermoautotrophicum deltaH: functional analysis and comparative genomics.</title>
        <authorList>
            <person name="Smith D.R."/>
            <person name="Doucette-Stamm L.A."/>
            <person name="Deloughery C."/>
            <person name="Lee H.-M."/>
            <person name="Dubois J."/>
            <person name="Aldredge T."/>
            <person name="Bashirzadeh R."/>
            <person name="Blakely D."/>
            <person name="Cook R."/>
            <person name="Gilbert K."/>
            <person name="Harrison D."/>
            <person name="Hoang L."/>
            <person name="Keagle P."/>
            <person name="Lumm W."/>
            <person name="Pothier B."/>
            <person name="Qiu D."/>
            <person name="Spadafora R."/>
            <person name="Vicare R."/>
            <person name="Wang Y."/>
            <person name="Wierzbowski J."/>
            <person name="Gibson R."/>
            <person name="Jiwani N."/>
            <person name="Caruso A."/>
            <person name="Bush D."/>
            <person name="Safer H."/>
            <person name="Patwell D."/>
            <person name="Prabhakar S."/>
            <person name="McDougall S."/>
            <person name="Shimer G."/>
            <person name="Goyal A."/>
            <person name="Pietrovski S."/>
            <person name="Church G.M."/>
            <person name="Daniels C.J."/>
            <person name="Mao J.-I."/>
            <person name="Rice P."/>
            <person name="Noelling J."/>
            <person name="Reeve J.N."/>
        </authorList>
    </citation>
    <scope>NUCLEOTIDE SEQUENCE [LARGE SCALE GENOMIC DNA]</scope>
    <source>
        <strain>ATCC 29096 / DSM 1053 / JCM 10044 / NBRC 100330 / Delta H</strain>
    </source>
</reference>
<dbReference type="EC" id="2.5.1.61"/>
<dbReference type="EMBL" id="AE000666">
    <property type="protein sequence ID" value="AAB85372.1"/>
    <property type="molecule type" value="Genomic_DNA"/>
</dbReference>
<dbReference type="PIR" id="G69216">
    <property type="entry name" value="G69216"/>
</dbReference>
<dbReference type="SMR" id="O26960"/>
<dbReference type="FunCoup" id="O26960">
    <property type="interactions" value="237"/>
</dbReference>
<dbReference type="STRING" id="187420.MTH_874"/>
<dbReference type="PaxDb" id="187420-MTH_874"/>
<dbReference type="EnsemblBacteria" id="AAB85372">
    <property type="protein sequence ID" value="AAB85372"/>
    <property type="gene ID" value="MTH_874"/>
</dbReference>
<dbReference type="KEGG" id="mth:MTH_874"/>
<dbReference type="PATRIC" id="fig|187420.15.peg.858"/>
<dbReference type="HOGENOM" id="CLU_019704_1_0_2"/>
<dbReference type="InParanoid" id="O26960"/>
<dbReference type="UniPathway" id="UPA00251">
    <property type="reaction ID" value="UER00319"/>
</dbReference>
<dbReference type="Proteomes" id="UP000005223">
    <property type="component" value="Chromosome"/>
</dbReference>
<dbReference type="GO" id="GO:0005737">
    <property type="term" value="C:cytoplasm"/>
    <property type="evidence" value="ECO:0007669"/>
    <property type="project" value="TreeGrafter"/>
</dbReference>
<dbReference type="GO" id="GO:0004418">
    <property type="term" value="F:hydroxymethylbilane synthase activity"/>
    <property type="evidence" value="ECO:0007669"/>
    <property type="project" value="UniProtKB-UniRule"/>
</dbReference>
<dbReference type="GO" id="GO:0006782">
    <property type="term" value="P:protoporphyrinogen IX biosynthetic process"/>
    <property type="evidence" value="ECO:0007669"/>
    <property type="project" value="UniProtKB-UniRule"/>
</dbReference>
<dbReference type="CDD" id="cd13644">
    <property type="entry name" value="PBP2_HemC_archaea"/>
    <property type="match status" value="1"/>
</dbReference>
<dbReference type="FunFam" id="3.40.190.10:FF:000005">
    <property type="entry name" value="Porphobilinogen deaminase"/>
    <property type="match status" value="1"/>
</dbReference>
<dbReference type="Gene3D" id="3.40.190.10">
    <property type="entry name" value="Periplasmic binding protein-like II"/>
    <property type="match status" value="2"/>
</dbReference>
<dbReference type="Gene3D" id="3.30.160.40">
    <property type="entry name" value="Porphobilinogen deaminase, C-terminal domain"/>
    <property type="match status" value="1"/>
</dbReference>
<dbReference type="HAMAP" id="MF_00260">
    <property type="entry name" value="Porphobil_deam"/>
    <property type="match status" value="1"/>
</dbReference>
<dbReference type="InterPro" id="IPR000860">
    <property type="entry name" value="HemC"/>
</dbReference>
<dbReference type="InterPro" id="IPR022419">
    <property type="entry name" value="Porphobilin_deaminase_cofac_BS"/>
</dbReference>
<dbReference type="InterPro" id="IPR022417">
    <property type="entry name" value="Porphobilin_deaminase_N"/>
</dbReference>
<dbReference type="InterPro" id="IPR022418">
    <property type="entry name" value="Porphobilinogen_deaminase_C"/>
</dbReference>
<dbReference type="InterPro" id="IPR036803">
    <property type="entry name" value="Porphobilinogen_deaminase_C_sf"/>
</dbReference>
<dbReference type="NCBIfam" id="TIGR00212">
    <property type="entry name" value="hemC"/>
    <property type="match status" value="1"/>
</dbReference>
<dbReference type="PANTHER" id="PTHR11557">
    <property type="entry name" value="PORPHOBILINOGEN DEAMINASE"/>
    <property type="match status" value="1"/>
</dbReference>
<dbReference type="PANTHER" id="PTHR11557:SF0">
    <property type="entry name" value="PORPHOBILINOGEN DEAMINASE"/>
    <property type="match status" value="1"/>
</dbReference>
<dbReference type="Pfam" id="PF01379">
    <property type="entry name" value="Porphobil_deam"/>
    <property type="match status" value="1"/>
</dbReference>
<dbReference type="Pfam" id="PF03900">
    <property type="entry name" value="Porphobil_deamC"/>
    <property type="match status" value="1"/>
</dbReference>
<dbReference type="PIRSF" id="PIRSF001438">
    <property type="entry name" value="4pyrrol_synth_OHMeBilane_synth"/>
    <property type="match status" value="1"/>
</dbReference>
<dbReference type="PRINTS" id="PR00151">
    <property type="entry name" value="PORPHBDMNASE"/>
</dbReference>
<dbReference type="SUPFAM" id="SSF53850">
    <property type="entry name" value="Periplasmic binding protein-like II"/>
    <property type="match status" value="1"/>
</dbReference>
<dbReference type="SUPFAM" id="SSF54782">
    <property type="entry name" value="Porphobilinogen deaminase (hydroxymethylbilane synthase), C-terminal domain"/>
    <property type="match status" value="1"/>
</dbReference>
<dbReference type="PROSITE" id="PS00533">
    <property type="entry name" value="PORPHOBILINOGEN_DEAM"/>
    <property type="match status" value="1"/>
</dbReference>
<proteinExistence type="inferred from homology"/>
<protein>
    <recommendedName>
        <fullName>Probable porphobilinogen deaminase</fullName>
        <shortName>PBG</shortName>
        <ecNumber>2.5.1.61</ecNumber>
    </recommendedName>
    <alternativeName>
        <fullName>Hydroxymethylbilane synthase</fullName>
        <shortName>HMBS</shortName>
    </alternativeName>
    <alternativeName>
        <fullName>Pre-uroporphyrinogen synthase</fullName>
    </alternativeName>
</protein>
<feature type="chain" id="PRO_0000143027" description="Probable porphobilinogen deaminase">
    <location>
        <begin position="1"/>
        <end position="289"/>
    </location>
</feature>
<feature type="modified residue" description="S-(dipyrrolylmethanemethyl)cysteine" evidence="1">
    <location>
        <position position="233"/>
    </location>
</feature>
<evidence type="ECO:0000250" key="1"/>
<evidence type="ECO:0000305" key="2"/>
<comment type="function">
    <text evidence="1">Tetrapolymerization of the monopyrrole PBG into the hydroxymethylbilane pre-uroporphyrinogen in several discrete steps.</text>
</comment>
<comment type="catalytic activity">
    <reaction>
        <text>4 porphobilinogen + H2O = hydroxymethylbilane + 4 NH4(+)</text>
        <dbReference type="Rhea" id="RHEA:13185"/>
        <dbReference type="ChEBI" id="CHEBI:15377"/>
        <dbReference type="ChEBI" id="CHEBI:28938"/>
        <dbReference type="ChEBI" id="CHEBI:57845"/>
        <dbReference type="ChEBI" id="CHEBI:58126"/>
        <dbReference type="EC" id="2.5.1.61"/>
    </reaction>
</comment>
<comment type="cofactor">
    <cofactor evidence="1">
        <name>dipyrromethane</name>
        <dbReference type="ChEBI" id="CHEBI:60342"/>
    </cofactor>
    <text evidence="1">Binds 1 dipyrromethane group covalently.</text>
</comment>
<comment type="pathway">
    <text>Porphyrin-containing compound metabolism; protoporphyrin-IX biosynthesis; coproporphyrinogen-III from 5-aminolevulinate: step 2/4.</text>
</comment>
<comment type="miscellaneous">
    <text evidence="1">The porphobilinogen subunits are added to the dipyrromethane group.</text>
</comment>
<comment type="similarity">
    <text evidence="2">Belongs to the HMBS family.</text>
</comment>
<gene>
    <name type="primary">hemC</name>
    <name type="ordered locus">MTH_874</name>
</gene>
<accession>O26960</accession>
<name>HEM3_METTH</name>
<sequence>MIAGTRGSRLALVQTNHVIEMLSEVCKEKIEKKIIKTKGDRIRDSQLYSMDSRGLFTRELDMAVLNEEVDLAVHSLKDVPSDLDPDLAIAAVPPRESPAEVLVSRLDWEDLPQGSKLGTSSLRREAFCNHHQKNFKMEPLRGNIDTRIRKVMDGEVHATIMAEAGLKRLGLEEHIKRRFPVEYFTPAAGQGALAVITRADSELISSIGRITHHPSLQEVTAEKTLLRELGAGCQCPLGVIGRATGNQLTLYAVLLTREGEMLRKVTVRGPLAEAEDIGKKAAKEMEDYI</sequence>